<proteinExistence type="inferred from homology"/>
<protein>
    <recommendedName>
        <fullName evidence="1">Serine--tRNA ligase</fullName>
        <ecNumber evidence="1">6.1.1.11</ecNumber>
    </recommendedName>
    <alternativeName>
        <fullName evidence="1">Seryl-tRNA synthetase</fullName>
        <shortName evidence="1">SerRS</shortName>
    </alternativeName>
    <alternativeName>
        <fullName evidence="1">Seryl-tRNA(Ser/Sec) synthetase</fullName>
    </alternativeName>
</protein>
<organism>
    <name type="scientific">Francisella tularensis subsp. tularensis (strain FSC 198)</name>
    <dbReference type="NCBI Taxonomy" id="393115"/>
    <lineage>
        <taxon>Bacteria</taxon>
        <taxon>Pseudomonadati</taxon>
        <taxon>Pseudomonadota</taxon>
        <taxon>Gammaproteobacteria</taxon>
        <taxon>Thiotrichales</taxon>
        <taxon>Francisellaceae</taxon>
        <taxon>Francisella</taxon>
    </lineage>
</organism>
<reference key="1">
    <citation type="journal article" date="2007" name="PLoS ONE">
        <title>Genome sequencing shows that European isolates of Francisella tularensis subspecies tularensis are almost identical to US laboratory strain Schu S4.</title>
        <authorList>
            <person name="Chaudhuri R.R."/>
            <person name="Ren C.-P."/>
            <person name="Desmond L."/>
            <person name="Vincent G.A."/>
            <person name="Silman N.J."/>
            <person name="Brehm J.K."/>
            <person name="Elmore M.J."/>
            <person name="Hudson M.J."/>
            <person name="Forsman M."/>
            <person name="Isherwood K.E."/>
            <person name="Gurycova D."/>
            <person name="Minton N.P."/>
            <person name="Titball R.W."/>
            <person name="Pallen M.J."/>
            <person name="Vipond R."/>
        </authorList>
    </citation>
    <scope>NUCLEOTIDE SEQUENCE [LARGE SCALE GENOMIC DNA]</scope>
    <source>
        <strain>FSC 198</strain>
    </source>
</reference>
<feature type="chain" id="PRO_1000019681" description="Serine--tRNA ligase">
    <location>
        <begin position="1"/>
        <end position="426"/>
    </location>
</feature>
<feature type="region of interest" description="Disordered" evidence="2">
    <location>
        <begin position="36"/>
        <end position="66"/>
    </location>
</feature>
<feature type="compositionally biased region" description="Polar residues" evidence="2">
    <location>
        <begin position="46"/>
        <end position="55"/>
    </location>
</feature>
<feature type="binding site" evidence="1">
    <location>
        <begin position="233"/>
        <end position="235"/>
    </location>
    <ligand>
        <name>L-serine</name>
        <dbReference type="ChEBI" id="CHEBI:33384"/>
    </ligand>
</feature>
<feature type="binding site" evidence="1">
    <location>
        <begin position="264"/>
        <end position="266"/>
    </location>
    <ligand>
        <name>ATP</name>
        <dbReference type="ChEBI" id="CHEBI:30616"/>
    </ligand>
</feature>
<feature type="binding site" evidence="1">
    <location>
        <position position="287"/>
    </location>
    <ligand>
        <name>L-serine</name>
        <dbReference type="ChEBI" id="CHEBI:33384"/>
    </ligand>
</feature>
<feature type="binding site" evidence="1">
    <location>
        <begin position="351"/>
        <end position="354"/>
    </location>
    <ligand>
        <name>ATP</name>
        <dbReference type="ChEBI" id="CHEBI:30616"/>
    </ligand>
</feature>
<feature type="binding site" evidence="1">
    <location>
        <position position="387"/>
    </location>
    <ligand>
        <name>L-serine</name>
        <dbReference type="ChEBI" id="CHEBI:33384"/>
    </ligand>
</feature>
<name>SYS_FRAT1</name>
<dbReference type="EC" id="6.1.1.11" evidence="1"/>
<dbReference type="EMBL" id="AM286280">
    <property type="protein sequence ID" value="CAL09346.1"/>
    <property type="molecule type" value="Genomic_DNA"/>
</dbReference>
<dbReference type="RefSeq" id="WP_003022075.1">
    <property type="nucleotide sequence ID" value="NC_008245.1"/>
</dbReference>
<dbReference type="SMR" id="Q14GR3"/>
<dbReference type="KEGG" id="ftf:FTF1330"/>
<dbReference type="HOGENOM" id="CLU_023797_1_1_6"/>
<dbReference type="UniPathway" id="UPA00906">
    <property type="reaction ID" value="UER00895"/>
</dbReference>
<dbReference type="GO" id="GO:0005737">
    <property type="term" value="C:cytoplasm"/>
    <property type="evidence" value="ECO:0007669"/>
    <property type="project" value="UniProtKB-SubCell"/>
</dbReference>
<dbReference type="GO" id="GO:0005524">
    <property type="term" value="F:ATP binding"/>
    <property type="evidence" value="ECO:0007669"/>
    <property type="project" value="UniProtKB-UniRule"/>
</dbReference>
<dbReference type="GO" id="GO:0004828">
    <property type="term" value="F:serine-tRNA ligase activity"/>
    <property type="evidence" value="ECO:0007669"/>
    <property type="project" value="UniProtKB-UniRule"/>
</dbReference>
<dbReference type="GO" id="GO:0016260">
    <property type="term" value="P:selenocysteine biosynthetic process"/>
    <property type="evidence" value="ECO:0007669"/>
    <property type="project" value="UniProtKB-UniRule"/>
</dbReference>
<dbReference type="GO" id="GO:0006434">
    <property type="term" value="P:seryl-tRNA aminoacylation"/>
    <property type="evidence" value="ECO:0007669"/>
    <property type="project" value="UniProtKB-UniRule"/>
</dbReference>
<dbReference type="CDD" id="cd00770">
    <property type="entry name" value="SerRS_core"/>
    <property type="match status" value="1"/>
</dbReference>
<dbReference type="Gene3D" id="3.30.930.10">
    <property type="entry name" value="Bira Bifunctional Protein, Domain 2"/>
    <property type="match status" value="1"/>
</dbReference>
<dbReference type="Gene3D" id="1.10.287.40">
    <property type="entry name" value="Serine-tRNA synthetase, tRNA binding domain"/>
    <property type="match status" value="1"/>
</dbReference>
<dbReference type="HAMAP" id="MF_00176">
    <property type="entry name" value="Ser_tRNA_synth_type1"/>
    <property type="match status" value="1"/>
</dbReference>
<dbReference type="InterPro" id="IPR002314">
    <property type="entry name" value="aa-tRNA-synt_IIb"/>
</dbReference>
<dbReference type="InterPro" id="IPR006195">
    <property type="entry name" value="aa-tRNA-synth_II"/>
</dbReference>
<dbReference type="InterPro" id="IPR045864">
    <property type="entry name" value="aa-tRNA-synth_II/BPL/LPL"/>
</dbReference>
<dbReference type="InterPro" id="IPR002317">
    <property type="entry name" value="Ser-tRNA-ligase_type_1"/>
</dbReference>
<dbReference type="InterPro" id="IPR015866">
    <property type="entry name" value="Ser-tRNA-synth_1_N"/>
</dbReference>
<dbReference type="InterPro" id="IPR042103">
    <property type="entry name" value="SerRS_1_N_sf"/>
</dbReference>
<dbReference type="InterPro" id="IPR033729">
    <property type="entry name" value="SerRS_core"/>
</dbReference>
<dbReference type="InterPro" id="IPR010978">
    <property type="entry name" value="tRNA-bd_arm"/>
</dbReference>
<dbReference type="NCBIfam" id="TIGR00414">
    <property type="entry name" value="serS"/>
    <property type="match status" value="1"/>
</dbReference>
<dbReference type="PANTHER" id="PTHR43697:SF1">
    <property type="entry name" value="SERINE--TRNA LIGASE"/>
    <property type="match status" value="1"/>
</dbReference>
<dbReference type="PANTHER" id="PTHR43697">
    <property type="entry name" value="SERYL-TRNA SYNTHETASE"/>
    <property type="match status" value="1"/>
</dbReference>
<dbReference type="Pfam" id="PF02403">
    <property type="entry name" value="Seryl_tRNA_N"/>
    <property type="match status" value="1"/>
</dbReference>
<dbReference type="Pfam" id="PF00587">
    <property type="entry name" value="tRNA-synt_2b"/>
    <property type="match status" value="1"/>
</dbReference>
<dbReference type="PIRSF" id="PIRSF001529">
    <property type="entry name" value="Ser-tRNA-synth_IIa"/>
    <property type="match status" value="1"/>
</dbReference>
<dbReference type="PRINTS" id="PR00981">
    <property type="entry name" value="TRNASYNTHSER"/>
</dbReference>
<dbReference type="SUPFAM" id="SSF55681">
    <property type="entry name" value="Class II aaRS and biotin synthetases"/>
    <property type="match status" value="1"/>
</dbReference>
<dbReference type="SUPFAM" id="SSF46589">
    <property type="entry name" value="tRNA-binding arm"/>
    <property type="match status" value="1"/>
</dbReference>
<dbReference type="PROSITE" id="PS50862">
    <property type="entry name" value="AA_TRNA_LIGASE_II"/>
    <property type="match status" value="1"/>
</dbReference>
<gene>
    <name evidence="1" type="primary">serS</name>
    <name type="ordered locus">FTF1330</name>
</gene>
<keyword id="KW-0030">Aminoacyl-tRNA synthetase</keyword>
<keyword id="KW-0067">ATP-binding</keyword>
<keyword id="KW-0963">Cytoplasm</keyword>
<keyword id="KW-0436">Ligase</keyword>
<keyword id="KW-0547">Nucleotide-binding</keyword>
<keyword id="KW-0648">Protein biosynthesis</keyword>
<sequence length="426" mass="48585">MLDAKYIKDNLQQVAEKLATRGYQFDIAEFEAQEQKRKHLQERTQDLQSQRNTISKEIGQKKAKGEDTSDIFAKVNQINEELKIIEKELKDLQDTINQTLLSMPNLPADDVPVGKDENDNVEIRRWGTPREFHPEAPAKDHSDIGEILKMIDFKAAAKVTGSRFMVLKNKIAKLHRALSQFMLDLHTEKHGYEELYVPYLVNNDSLYGTGQLPKFAADLFKLEGDFEYSLIPTAEVPITNLVRDEILDTETLPRYYTAHTPCFRSEAGSYGRDTKGMIRQHQFEKVELVHITTADKGEESLELLTSHAEKVLQKLNLPYRVMKLCTGDMGFSAKKTYDLEVWLPSQNTYREISSCSWCGDFQARRMKARHKNPSMKKPELVHTLNGSGLAVGRTLLAIIENYQQEDGSIMVPDALIKYMGGISVIK</sequence>
<comment type="function">
    <text evidence="1">Catalyzes the attachment of serine to tRNA(Ser). Is also able to aminoacylate tRNA(Sec) with serine, to form the misacylated tRNA L-seryl-tRNA(Sec), which will be further converted into selenocysteinyl-tRNA(Sec).</text>
</comment>
<comment type="catalytic activity">
    <reaction evidence="1">
        <text>tRNA(Ser) + L-serine + ATP = L-seryl-tRNA(Ser) + AMP + diphosphate + H(+)</text>
        <dbReference type="Rhea" id="RHEA:12292"/>
        <dbReference type="Rhea" id="RHEA-COMP:9669"/>
        <dbReference type="Rhea" id="RHEA-COMP:9703"/>
        <dbReference type="ChEBI" id="CHEBI:15378"/>
        <dbReference type="ChEBI" id="CHEBI:30616"/>
        <dbReference type="ChEBI" id="CHEBI:33019"/>
        <dbReference type="ChEBI" id="CHEBI:33384"/>
        <dbReference type="ChEBI" id="CHEBI:78442"/>
        <dbReference type="ChEBI" id="CHEBI:78533"/>
        <dbReference type="ChEBI" id="CHEBI:456215"/>
        <dbReference type="EC" id="6.1.1.11"/>
    </reaction>
</comment>
<comment type="catalytic activity">
    <reaction evidence="1">
        <text>tRNA(Sec) + L-serine + ATP = L-seryl-tRNA(Sec) + AMP + diphosphate + H(+)</text>
        <dbReference type="Rhea" id="RHEA:42580"/>
        <dbReference type="Rhea" id="RHEA-COMP:9742"/>
        <dbReference type="Rhea" id="RHEA-COMP:10128"/>
        <dbReference type="ChEBI" id="CHEBI:15378"/>
        <dbReference type="ChEBI" id="CHEBI:30616"/>
        <dbReference type="ChEBI" id="CHEBI:33019"/>
        <dbReference type="ChEBI" id="CHEBI:33384"/>
        <dbReference type="ChEBI" id="CHEBI:78442"/>
        <dbReference type="ChEBI" id="CHEBI:78533"/>
        <dbReference type="ChEBI" id="CHEBI:456215"/>
        <dbReference type="EC" id="6.1.1.11"/>
    </reaction>
</comment>
<comment type="pathway">
    <text evidence="1">Aminoacyl-tRNA biosynthesis; selenocysteinyl-tRNA(Sec) biosynthesis; L-seryl-tRNA(Sec) from L-serine and tRNA(Sec): step 1/1.</text>
</comment>
<comment type="subunit">
    <text evidence="1">Homodimer. The tRNA molecule binds across the dimer.</text>
</comment>
<comment type="subcellular location">
    <subcellularLocation>
        <location evidence="1">Cytoplasm</location>
    </subcellularLocation>
</comment>
<comment type="domain">
    <text evidence="1">Consists of two distinct domains, a catalytic core and a N-terminal extension that is involved in tRNA binding.</text>
</comment>
<comment type="similarity">
    <text evidence="1">Belongs to the class-II aminoacyl-tRNA synthetase family. Type-1 seryl-tRNA synthetase subfamily.</text>
</comment>
<accession>Q14GR3</accession>
<evidence type="ECO:0000255" key="1">
    <source>
        <dbReference type="HAMAP-Rule" id="MF_00176"/>
    </source>
</evidence>
<evidence type="ECO:0000256" key="2">
    <source>
        <dbReference type="SAM" id="MobiDB-lite"/>
    </source>
</evidence>